<organism>
    <name type="scientific">Streptococcus pyogenes serotype M3 (strain ATCC BAA-595 / MGAS315)</name>
    <dbReference type="NCBI Taxonomy" id="198466"/>
    <lineage>
        <taxon>Bacteria</taxon>
        <taxon>Bacillati</taxon>
        <taxon>Bacillota</taxon>
        <taxon>Bacilli</taxon>
        <taxon>Lactobacillales</taxon>
        <taxon>Streptococcaceae</taxon>
        <taxon>Streptococcus</taxon>
    </lineage>
</organism>
<name>DHPS_STRP3</name>
<sequence>MKIGKFVIEGNAAIMGILNVTPDSFSDGGSYTTVQKALDHVEQMIADGAKIIDVGGESTRPGCQFVSATDEIDRVVPVIKAIKENYDILISIDTYKTETARAALEAGADILNDVWAGLYDGQMFALAAEYDAPIILMHNQDEEVYQEVTQDVCDFLGNRAQAALDAGVPKNNIWIDPGFGFAKSVQQNTELLKRLDRVCQLGYPVLFGISRKRVVDALLGGNTKAKERDGATAALSAYALGKGCQIVRVHDVKANQDIVAVLSQLM</sequence>
<keyword id="KW-0289">Folate biosynthesis</keyword>
<keyword id="KW-0460">Magnesium</keyword>
<keyword id="KW-0479">Metal-binding</keyword>
<keyword id="KW-0808">Transferase</keyword>
<evidence type="ECO:0000250" key="1"/>
<evidence type="ECO:0000250" key="2">
    <source>
        <dbReference type="UniProtKB" id="P0AC13"/>
    </source>
</evidence>
<evidence type="ECO:0000250" key="3">
    <source>
        <dbReference type="UniProtKB" id="P9WND1"/>
    </source>
</evidence>
<evidence type="ECO:0000255" key="4">
    <source>
        <dbReference type="PROSITE-ProRule" id="PRU00334"/>
    </source>
</evidence>
<evidence type="ECO:0000305" key="5"/>
<gene>
    <name type="primary">folP</name>
    <name type="ordered locus">SpyM3_0760</name>
</gene>
<comment type="function">
    <text evidence="2">Catalyzes the condensation of para-aminobenzoate (pABA) with 6-hydroxymethyl-7,8-dihydropterin diphosphate (DHPt-PP) to form 7,8-dihydropteroate (H2Pte), the immediate precursor of folate derivatives.</text>
</comment>
<comment type="catalytic activity">
    <reaction evidence="2">
        <text>(7,8-dihydropterin-6-yl)methyl diphosphate + 4-aminobenzoate = 7,8-dihydropteroate + diphosphate</text>
        <dbReference type="Rhea" id="RHEA:19949"/>
        <dbReference type="ChEBI" id="CHEBI:17836"/>
        <dbReference type="ChEBI" id="CHEBI:17839"/>
        <dbReference type="ChEBI" id="CHEBI:33019"/>
        <dbReference type="ChEBI" id="CHEBI:72950"/>
        <dbReference type="EC" id="2.5.1.15"/>
    </reaction>
</comment>
<comment type="cofactor">
    <cofactor evidence="2">
        <name>Mg(2+)</name>
        <dbReference type="ChEBI" id="CHEBI:18420"/>
    </cofactor>
</comment>
<comment type="pathway">
    <text>Cofactor biosynthesis; tetrahydrofolate biosynthesis; 7,8-dihydrofolate from 2-amino-4-hydroxy-6-hydroxymethyl-7,8-dihydropteridine diphosphate and 4-aminobenzoate: step 1/2.</text>
</comment>
<comment type="subunit">
    <text evidence="1">Homodimer or homotrimer.</text>
</comment>
<comment type="similarity">
    <text evidence="5">Belongs to the DHPS family.</text>
</comment>
<feature type="chain" id="PRO_0000168234" description="Dihydropteroate synthase">
    <location>
        <begin position="1"/>
        <end position="266"/>
    </location>
</feature>
<feature type="domain" description="Pterin-binding" evidence="4">
    <location>
        <begin position="12"/>
        <end position="260"/>
    </location>
</feature>
<feature type="binding site" evidence="3">
    <location>
        <position position="19"/>
    </location>
    <ligand>
        <name>Mg(2+)</name>
        <dbReference type="ChEBI" id="CHEBI:18420"/>
    </ligand>
</feature>
<feature type="binding site" evidence="2">
    <location>
        <position position="59"/>
    </location>
    <ligand>
        <name>(7,8-dihydropterin-6-yl)methyl diphosphate</name>
        <dbReference type="ChEBI" id="CHEBI:72950"/>
    </ligand>
</feature>
<feature type="binding site" evidence="2">
    <location>
        <position position="93"/>
    </location>
    <ligand>
        <name>(7,8-dihydropterin-6-yl)methyl diphosphate</name>
        <dbReference type="ChEBI" id="CHEBI:72950"/>
    </ligand>
</feature>
<feature type="binding site" evidence="2">
    <location>
        <position position="112"/>
    </location>
    <ligand>
        <name>(7,8-dihydropterin-6-yl)methyl diphosphate</name>
        <dbReference type="ChEBI" id="CHEBI:72950"/>
    </ligand>
</feature>
<feature type="binding site" evidence="2">
    <location>
        <position position="176"/>
    </location>
    <ligand>
        <name>(7,8-dihydropterin-6-yl)methyl diphosphate</name>
        <dbReference type="ChEBI" id="CHEBI:72950"/>
    </ligand>
</feature>
<feature type="binding site" evidence="2">
    <location>
        <position position="212"/>
    </location>
    <ligand>
        <name>(7,8-dihydropterin-6-yl)methyl diphosphate</name>
        <dbReference type="ChEBI" id="CHEBI:72950"/>
    </ligand>
</feature>
<feature type="binding site" evidence="2">
    <location>
        <begin position="248"/>
        <end position="250"/>
    </location>
    <ligand>
        <name>(7,8-dihydropterin-6-yl)methyl diphosphate</name>
        <dbReference type="ChEBI" id="CHEBI:72950"/>
    </ligand>
</feature>
<reference key="1">
    <citation type="journal article" date="2002" name="Proc. Natl. Acad. Sci. U.S.A.">
        <title>Genome sequence of a serotype M3 strain of group A Streptococcus: phage-encoded toxins, the high-virulence phenotype, and clone emergence.</title>
        <authorList>
            <person name="Beres S.B."/>
            <person name="Sylva G.L."/>
            <person name="Barbian K.D."/>
            <person name="Lei B."/>
            <person name="Hoff J.S."/>
            <person name="Mammarella N.D."/>
            <person name="Liu M.-Y."/>
            <person name="Smoot J.C."/>
            <person name="Porcella S.F."/>
            <person name="Parkins L.D."/>
            <person name="Campbell D.S."/>
            <person name="Smith T.M."/>
            <person name="McCormick J.K."/>
            <person name="Leung D.Y.M."/>
            <person name="Schlievert P.M."/>
            <person name="Musser J.M."/>
        </authorList>
    </citation>
    <scope>NUCLEOTIDE SEQUENCE [LARGE SCALE GENOMIC DNA]</scope>
    <source>
        <strain>ATCC BAA-595 / MGAS315</strain>
    </source>
</reference>
<proteinExistence type="inferred from homology"/>
<dbReference type="EC" id="2.5.1.15"/>
<dbReference type="EMBL" id="AE014074">
    <property type="protein sequence ID" value="AAM79367.1"/>
    <property type="molecule type" value="Genomic_DNA"/>
</dbReference>
<dbReference type="RefSeq" id="WP_011054468.1">
    <property type="nucleotide sequence ID" value="NC_004070.1"/>
</dbReference>
<dbReference type="SMR" id="P0DB08"/>
<dbReference type="KEGG" id="spg:SpyM3_0760"/>
<dbReference type="HOGENOM" id="CLU_008023_0_2_9"/>
<dbReference type="UniPathway" id="UPA00077">
    <property type="reaction ID" value="UER00156"/>
</dbReference>
<dbReference type="Proteomes" id="UP000000564">
    <property type="component" value="Chromosome"/>
</dbReference>
<dbReference type="GO" id="GO:0005829">
    <property type="term" value="C:cytosol"/>
    <property type="evidence" value="ECO:0007669"/>
    <property type="project" value="TreeGrafter"/>
</dbReference>
<dbReference type="GO" id="GO:0004156">
    <property type="term" value="F:dihydropteroate synthase activity"/>
    <property type="evidence" value="ECO:0007669"/>
    <property type="project" value="UniProtKB-EC"/>
</dbReference>
<dbReference type="GO" id="GO:0046872">
    <property type="term" value="F:metal ion binding"/>
    <property type="evidence" value="ECO:0007669"/>
    <property type="project" value="UniProtKB-KW"/>
</dbReference>
<dbReference type="GO" id="GO:0046656">
    <property type="term" value="P:folic acid biosynthetic process"/>
    <property type="evidence" value="ECO:0007669"/>
    <property type="project" value="UniProtKB-KW"/>
</dbReference>
<dbReference type="GO" id="GO:0046654">
    <property type="term" value="P:tetrahydrofolate biosynthetic process"/>
    <property type="evidence" value="ECO:0007669"/>
    <property type="project" value="UniProtKB-UniPathway"/>
</dbReference>
<dbReference type="CDD" id="cd00739">
    <property type="entry name" value="DHPS"/>
    <property type="match status" value="1"/>
</dbReference>
<dbReference type="FunFam" id="3.20.20.20:FF:000006">
    <property type="entry name" value="Dihydropteroate synthase"/>
    <property type="match status" value="1"/>
</dbReference>
<dbReference type="Gene3D" id="3.20.20.20">
    <property type="entry name" value="Dihydropteroate synthase-like"/>
    <property type="match status" value="1"/>
</dbReference>
<dbReference type="InterPro" id="IPR045031">
    <property type="entry name" value="DHP_synth-like"/>
</dbReference>
<dbReference type="InterPro" id="IPR006390">
    <property type="entry name" value="DHP_synth_dom"/>
</dbReference>
<dbReference type="InterPro" id="IPR011005">
    <property type="entry name" value="Dihydropteroate_synth-like_sf"/>
</dbReference>
<dbReference type="InterPro" id="IPR000489">
    <property type="entry name" value="Pterin-binding_dom"/>
</dbReference>
<dbReference type="NCBIfam" id="TIGR01496">
    <property type="entry name" value="DHPS"/>
    <property type="match status" value="1"/>
</dbReference>
<dbReference type="PANTHER" id="PTHR20941">
    <property type="entry name" value="FOLATE SYNTHESIS PROTEINS"/>
    <property type="match status" value="1"/>
</dbReference>
<dbReference type="PANTHER" id="PTHR20941:SF1">
    <property type="entry name" value="FOLIC ACID SYNTHESIS PROTEIN FOL1"/>
    <property type="match status" value="1"/>
</dbReference>
<dbReference type="Pfam" id="PF00809">
    <property type="entry name" value="Pterin_bind"/>
    <property type="match status" value="1"/>
</dbReference>
<dbReference type="SUPFAM" id="SSF51717">
    <property type="entry name" value="Dihydropteroate synthetase-like"/>
    <property type="match status" value="1"/>
</dbReference>
<dbReference type="PROSITE" id="PS00792">
    <property type="entry name" value="DHPS_1"/>
    <property type="match status" value="1"/>
</dbReference>
<dbReference type="PROSITE" id="PS00793">
    <property type="entry name" value="DHPS_2"/>
    <property type="match status" value="1"/>
</dbReference>
<dbReference type="PROSITE" id="PS50972">
    <property type="entry name" value="PTERIN_BINDING"/>
    <property type="match status" value="1"/>
</dbReference>
<accession>P0DB08</accession>
<accession>Q8K7K8</accession>
<protein>
    <recommendedName>
        <fullName>Dihydropteroate synthase</fullName>
        <shortName>DHPS</shortName>
        <ecNumber>2.5.1.15</ecNumber>
    </recommendedName>
    <alternativeName>
        <fullName>Dihydropteroate pyrophosphorylase</fullName>
    </alternativeName>
</protein>